<name>ZFP8_ARATH</name>
<proteinExistence type="evidence at protein level"/>
<sequence length="257" mass="29571">MDETNGRRETHDFMNVNVESFSQLPFIRRTPPKEKAAIIRLFGQELVGDNSDNLSAEPSDHQTTTKNDESSENIKDKDKEKDKDKDKDNNNNRRFECHYCFRNFPTSQALGGHQNAHKRERQHAKRGSMTSYLHHHQPHDPHHIYGFLNNHHHRHYPSWTTEARSYYGGGGHQTPSYYSRNTLAPPSSNPPTINGSPLGLWRVPPSTSTNTIQGVYSSSPASAFRSHEQETNKEPNNWPYRLMKPNVQDHVSLDLHL</sequence>
<dbReference type="EMBL" id="L39651">
    <property type="protein sequence ID" value="AAA87304.1"/>
    <property type="status" value="ALT_SEQ"/>
    <property type="molecule type" value="mRNA"/>
</dbReference>
<dbReference type="EMBL" id="U90439">
    <property type="protein sequence ID" value="AAB63548.1"/>
    <property type="molecule type" value="Genomic_DNA"/>
</dbReference>
<dbReference type="EMBL" id="CP002685">
    <property type="protein sequence ID" value="AEC10051.1"/>
    <property type="molecule type" value="Genomic_DNA"/>
</dbReference>
<dbReference type="EMBL" id="AY039597">
    <property type="protein sequence ID" value="AAK62652.1"/>
    <property type="molecule type" value="mRNA"/>
</dbReference>
<dbReference type="EMBL" id="AY056093">
    <property type="protein sequence ID" value="AAL06981.1"/>
    <property type="molecule type" value="mRNA"/>
</dbReference>
<dbReference type="PIR" id="A84848">
    <property type="entry name" value="A84848"/>
</dbReference>
<dbReference type="PIR" id="S55888">
    <property type="entry name" value="S55888"/>
</dbReference>
<dbReference type="RefSeq" id="NP_181725.1">
    <property type="nucleotide sequence ID" value="NM_129758.3"/>
</dbReference>
<dbReference type="BioGRID" id="4131">
    <property type="interactions" value="32"/>
</dbReference>
<dbReference type="FunCoup" id="P93751">
    <property type="interactions" value="541"/>
</dbReference>
<dbReference type="IntAct" id="P93751">
    <property type="interactions" value="31"/>
</dbReference>
<dbReference type="STRING" id="3702.P93751"/>
<dbReference type="PaxDb" id="3702-AT2G41940.1"/>
<dbReference type="ProteomicsDB" id="242977"/>
<dbReference type="EnsemblPlants" id="AT2G41940.1">
    <property type="protein sequence ID" value="AT2G41940.1"/>
    <property type="gene ID" value="AT2G41940"/>
</dbReference>
<dbReference type="GeneID" id="818794"/>
<dbReference type="Gramene" id="AT2G41940.1">
    <property type="protein sequence ID" value="AT2G41940.1"/>
    <property type="gene ID" value="AT2G41940"/>
</dbReference>
<dbReference type="KEGG" id="ath:AT2G41940"/>
<dbReference type="Araport" id="AT2G41940"/>
<dbReference type="TAIR" id="AT2G41940">
    <property type="gene designation" value="ZFP8"/>
</dbReference>
<dbReference type="eggNOG" id="ENOG502R1BM">
    <property type="taxonomic scope" value="Eukaryota"/>
</dbReference>
<dbReference type="HOGENOM" id="CLU_058544_1_0_1"/>
<dbReference type="InParanoid" id="P93751"/>
<dbReference type="OMA" id="FRTHEQE"/>
<dbReference type="OrthoDB" id="9442240at2759"/>
<dbReference type="PhylomeDB" id="P93751"/>
<dbReference type="PRO" id="PR:P93751"/>
<dbReference type="Proteomes" id="UP000006548">
    <property type="component" value="Chromosome 2"/>
</dbReference>
<dbReference type="ExpressionAtlas" id="P93751">
    <property type="expression patterns" value="baseline and differential"/>
</dbReference>
<dbReference type="GO" id="GO:0005634">
    <property type="term" value="C:nucleus"/>
    <property type="evidence" value="ECO:0007669"/>
    <property type="project" value="UniProtKB-SubCell"/>
</dbReference>
<dbReference type="GO" id="GO:0003700">
    <property type="term" value="F:DNA-binding transcription factor activity"/>
    <property type="evidence" value="ECO:0000250"/>
    <property type="project" value="TAIR"/>
</dbReference>
<dbReference type="GO" id="GO:0000976">
    <property type="term" value="F:transcription cis-regulatory region binding"/>
    <property type="evidence" value="ECO:0000353"/>
    <property type="project" value="TAIR"/>
</dbReference>
<dbReference type="GO" id="GO:0008270">
    <property type="term" value="F:zinc ion binding"/>
    <property type="evidence" value="ECO:0007669"/>
    <property type="project" value="UniProtKB-KW"/>
</dbReference>
<dbReference type="GO" id="GO:0009738">
    <property type="term" value="P:abscisic acid-activated signaling pathway"/>
    <property type="evidence" value="ECO:0007669"/>
    <property type="project" value="UniProtKB-KW"/>
</dbReference>
<dbReference type="GO" id="GO:0009736">
    <property type="term" value="P:cytokinin-activated signaling pathway"/>
    <property type="evidence" value="ECO:0007669"/>
    <property type="project" value="UniProtKB-KW"/>
</dbReference>
<dbReference type="GO" id="GO:0009740">
    <property type="term" value="P:gibberellic acid mediated signaling pathway"/>
    <property type="evidence" value="ECO:0007669"/>
    <property type="project" value="UniProtKB-KW"/>
</dbReference>
<dbReference type="GO" id="GO:0009788">
    <property type="term" value="P:negative regulation of abscisic acid-activated signaling pathway"/>
    <property type="evidence" value="ECO:0000315"/>
    <property type="project" value="UniProtKB"/>
</dbReference>
<dbReference type="GO" id="GO:0006355">
    <property type="term" value="P:regulation of DNA-templated transcription"/>
    <property type="evidence" value="ECO:0000304"/>
    <property type="project" value="TAIR"/>
</dbReference>
<dbReference type="GO" id="GO:0010026">
    <property type="term" value="P:trichome differentiation"/>
    <property type="evidence" value="ECO:0000315"/>
    <property type="project" value="TAIR"/>
</dbReference>
<dbReference type="GO" id="GO:0010090">
    <property type="term" value="P:trichome morphogenesis"/>
    <property type="evidence" value="ECO:0007669"/>
    <property type="project" value="InterPro"/>
</dbReference>
<dbReference type="InterPro" id="IPR044291">
    <property type="entry name" value="GIS/GIS2/ZFP8"/>
</dbReference>
<dbReference type="InterPro" id="IPR036236">
    <property type="entry name" value="Znf_C2H2_sf"/>
</dbReference>
<dbReference type="InterPro" id="IPR013087">
    <property type="entry name" value="Znf_C2H2_type"/>
</dbReference>
<dbReference type="PANTHER" id="PTHR46547:SF10">
    <property type="entry name" value="ZINC FINGER PROTEIN 8"/>
    <property type="match status" value="1"/>
</dbReference>
<dbReference type="PANTHER" id="PTHR46547">
    <property type="entry name" value="ZINC FINGER PROTEIN GIS"/>
    <property type="match status" value="1"/>
</dbReference>
<dbReference type="Pfam" id="PF13912">
    <property type="entry name" value="zf-C2H2_6"/>
    <property type="match status" value="1"/>
</dbReference>
<dbReference type="SUPFAM" id="SSF57667">
    <property type="entry name" value="beta-beta-alpha zinc fingers"/>
    <property type="match status" value="1"/>
</dbReference>
<dbReference type="PROSITE" id="PS00028">
    <property type="entry name" value="ZINC_FINGER_C2H2_1"/>
    <property type="match status" value="1"/>
</dbReference>
<dbReference type="PROSITE" id="PS50157">
    <property type="entry name" value="ZINC_FINGER_C2H2_2"/>
    <property type="match status" value="1"/>
</dbReference>
<evidence type="ECO:0000250" key="1">
    <source>
        <dbReference type="UniProtKB" id="Q39261"/>
    </source>
</evidence>
<evidence type="ECO:0000255" key="2">
    <source>
        <dbReference type="PROSITE-ProRule" id="PRU00042"/>
    </source>
</evidence>
<evidence type="ECO:0000256" key="3">
    <source>
        <dbReference type="SAM" id="MobiDB-lite"/>
    </source>
</evidence>
<evidence type="ECO:0000269" key="4">
    <source>
    </source>
</evidence>
<evidence type="ECO:0000269" key="5">
    <source>
    </source>
</evidence>
<evidence type="ECO:0000303" key="6">
    <source>
    </source>
</evidence>
<evidence type="ECO:0000305" key="7"/>
<comment type="function">
    <text evidence="4 5">Probable transcription factor required for the initiation of inflorescence trichomes in response to gibberellin and cytokinin. Is not involved in the regulation of trichome branching. Is functionally equivalent to GIS2 (PubMed:17507408). Acts as a negative regulator of abscisic acid (ABA) signaling during germination and early seedling development (PubMed:24808098).</text>
</comment>
<comment type="interaction">
    <interactant intactId="EBI-15193377">
        <id>P93751</id>
    </interactant>
    <interactant intactId="EBI-15191535">
        <id>O80748</id>
        <label>BBX26</label>
    </interactant>
    <organismsDiffer>false</organismsDiffer>
    <experiments>3</experiments>
</comment>
<comment type="interaction">
    <interactant intactId="EBI-15193377">
        <id>P93751</id>
    </interactant>
    <interactant intactId="EBI-4424877">
        <id>Q9S7W5</id>
        <label>TCP13</label>
    </interactant>
    <organismsDiffer>false</organismsDiffer>
    <experiments>3</experiments>
</comment>
<comment type="subcellular location">
    <subcellularLocation>
        <location evidence="1">Nucleus</location>
    </subcellularLocation>
</comment>
<comment type="tissue specificity">
    <text evidence="4">Expressed in developing cauline leaves.</text>
</comment>
<comment type="induction">
    <text evidence="4">By gibberellin.</text>
</comment>
<comment type="disruption phenotype">
    <text evidence="4">Reduced trichome production on cauline leaves, stem branches and sepals.</text>
</comment>
<comment type="miscellaneous">
    <text evidence="5">Seeds over-expressing ZFP8 show decreased sensitivity to inhibition of germination by abscisic acid (ABA).</text>
</comment>
<comment type="sequence caution" evidence="7">
    <conflict type="miscellaneous discrepancy">
        <sequence resource="EMBL-CDS" id="AAA87304"/>
    </conflict>
    <text>Sequencing errors.</text>
</comment>
<organism>
    <name type="scientific">Arabidopsis thaliana</name>
    <name type="common">Mouse-ear cress</name>
    <dbReference type="NCBI Taxonomy" id="3702"/>
    <lineage>
        <taxon>Eukaryota</taxon>
        <taxon>Viridiplantae</taxon>
        <taxon>Streptophyta</taxon>
        <taxon>Embryophyta</taxon>
        <taxon>Tracheophyta</taxon>
        <taxon>Spermatophyta</taxon>
        <taxon>Magnoliopsida</taxon>
        <taxon>eudicotyledons</taxon>
        <taxon>Gunneridae</taxon>
        <taxon>Pentapetalae</taxon>
        <taxon>rosids</taxon>
        <taxon>malvids</taxon>
        <taxon>Brassicales</taxon>
        <taxon>Brassicaceae</taxon>
        <taxon>Camelineae</taxon>
        <taxon>Arabidopsis</taxon>
    </lineage>
</organism>
<protein>
    <recommendedName>
        <fullName evidence="7">Zinc finger protein 8</fullName>
    </recommendedName>
</protein>
<reference key="1">
    <citation type="journal article" date="1995" name="Plant Mol. Biol.">
        <title>Characterization of a family of Arabidopsis zinc finger protein cDNAs.</title>
        <authorList>
            <person name="Tague B.W."/>
            <person name="Goodman H.M."/>
        </authorList>
    </citation>
    <scope>NUCLEOTIDE SEQUENCE [MRNA]</scope>
    <source>
        <strain>cv. Landsberg erecta</strain>
        <tissue>Leaf</tissue>
    </source>
</reference>
<reference key="2">
    <citation type="journal article" date="1999" name="Nature">
        <title>Sequence and analysis of chromosome 2 of the plant Arabidopsis thaliana.</title>
        <authorList>
            <person name="Lin X."/>
            <person name="Kaul S."/>
            <person name="Rounsley S.D."/>
            <person name="Shea T.P."/>
            <person name="Benito M.-I."/>
            <person name="Town C.D."/>
            <person name="Fujii C.Y."/>
            <person name="Mason T.M."/>
            <person name="Bowman C.L."/>
            <person name="Barnstead M.E."/>
            <person name="Feldblyum T.V."/>
            <person name="Buell C.R."/>
            <person name="Ketchum K.A."/>
            <person name="Lee J.J."/>
            <person name="Ronning C.M."/>
            <person name="Koo H.L."/>
            <person name="Moffat K.S."/>
            <person name="Cronin L.A."/>
            <person name="Shen M."/>
            <person name="Pai G."/>
            <person name="Van Aken S."/>
            <person name="Umayam L."/>
            <person name="Tallon L.J."/>
            <person name="Gill J.E."/>
            <person name="Adams M.D."/>
            <person name="Carrera A.J."/>
            <person name="Creasy T.H."/>
            <person name="Goodman H.M."/>
            <person name="Somerville C.R."/>
            <person name="Copenhaver G.P."/>
            <person name="Preuss D."/>
            <person name="Nierman W.C."/>
            <person name="White O."/>
            <person name="Eisen J.A."/>
            <person name="Salzberg S.L."/>
            <person name="Fraser C.M."/>
            <person name="Venter J.C."/>
        </authorList>
    </citation>
    <scope>NUCLEOTIDE SEQUENCE [LARGE SCALE GENOMIC DNA]</scope>
    <source>
        <strain>cv. Columbia</strain>
    </source>
</reference>
<reference key="3">
    <citation type="journal article" date="2017" name="Plant J.">
        <title>Araport11: a complete reannotation of the Arabidopsis thaliana reference genome.</title>
        <authorList>
            <person name="Cheng C.Y."/>
            <person name="Krishnakumar V."/>
            <person name="Chan A.P."/>
            <person name="Thibaud-Nissen F."/>
            <person name="Schobel S."/>
            <person name="Town C.D."/>
        </authorList>
    </citation>
    <scope>GENOME REANNOTATION</scope>
    <source>
        <strain>cv. Columbia</strain>
    </source>
</reference>
<reference key="4">
    <citation type="journal article" date="2003" name="Science">
        <title>Empirical analysis of transcriptional activity in the Arabidopsis genome.</title>
        <authorList>
            <person name="Yamada K."/>
            <person name="Lim J."/>
            <person name="Dale J.M."/>
            <person name="Chen H."/>
            <person name="Shinn P."/>
            <person name="Palm C.J."/>
            <person name="Southwick A.M."/>
            <person name="Wu H.C."/>
            <person name="Kim C.J."/>
            <person name="Nguyen M."/>
            <person name="Pham P.K."/>
            <person name="Cheuk R.F."/>
            <person name="Karlin-Newmann G."/>
            <person name="Liu S.X."/>
            <person name="Lam B."/>
            <person name="Sakano H."/>
            <person name="Wu T."/>
            <person name="Yu G."/>
            <person name="Miranda M."/>
            <person name="Quach H.L."/>
            <person name="Tripp M."/>
            <person name="Chang C.H."/>
            <person name="Lee J.M."/>
            <person name="Toriumi M.J."/>
            <person name="Chan M.M."/>
            <person name="Tang C.C."/>
            <person name="Onodera C.S."/>
            <person name="Deng J.M."/>
            <person name="Akiyama K."/>
            <person name="Ansari Y."/>
            <person name="Arakawa T."/>
            <person name="Banh J."/>
            <person name="Banno F."/>
            <person name="Bowser L."/>
            <person name="Brooks S.Y."/>
            <person name="Carninci P."/>
            <person name="Chao Q."/>
            <person name="Choy N."/>
            <person name="Enju A."/>
            <person name="Goldsmith A.D."/>
            <person name="Gurjal M."/>
            <person name="Hansen N.F."/>
            <person name="Hayashizaki Y."/>
            <person name="Johnson-Hopson C."/>
            <person name="Hsuan V.W."/>
            <person name="Iida K."/>
            <person name="Karnes M."/>
            <person name="Khan S."/>
            <person name="Koesema E."/>
            <person name="Ishida J."/>
            <person name="Jiang P.X."/>
            <person name="Jones T."/>
            <person name="Kawai J."/>
            <person name="Kamiya A."/>
            <person name="Meyers C."/>
            <person name="Nakajima M."/>
            <person name="Narusaka M."/>
            <person name="Seki M."/>
            <person name="Sakurai T."/>
            <person name="Satou M."/>
            <person name="Tamse R."/>
            <person name="Vaysberg M."/>
            <person name="Wallender E.K."/>
            <person name="Wong C."/>
            <person name="Yamamura Y."/>
            <person name="Yuan S."/>
            <person name="Shinozaki K."/>
            <person name="Davis R.W."/>
            <person name="Theologis A."/>
            <person name="Ecker J.R."/>
        </authorList>
    </citation>
    <scope>NUCLEOTIDE SEQUENCE [LARGE SCALE MRNA]</scope>
    <source>
        <strain>cv. Columbia</strain>
    </source>
</reference>
<reference key="5">
    <citation type="journal article" date="2007" name="Development">
        <title>Integration of cytokinin and gibberellin signalling by Arabidopsis transcription factors GIS, ZFP8 and GIS2 in the regulation of epidermal cell fate.</title>
        <authorList>
            <person name="Gan Y."/>
            <person name="Liu C."/>
            <person name="Yu H."/>
            <person name="Broun P."/>
        </authorList>
    </citation>
    <scope>FUNCTION</scope>
    <scope>TISSUE SPECIFICITY</scope>
    <scope>INDUCTION</scope>
    <scope>DISRUPTION PHENOTYPE</scope>
</reference>
<reference key="6">
    <citation type="journal article" date="2014" name="Plant Physiol.">
        <title>The Arabidopsis ZINC FINGER PROTEIN3 interferes with abscisic acid and light signaling in seed germination and plant development.</title>
        <authorList>
            <person name="Joseph M.P."/>
            <person name="Papdi C."/>
            <person name="Kozma-Bognar L."/>
            <person name="Nagy I."/>
            <person name="Lopez-Carbonell M."/>
            <person name="Rigo G."/>
            <person name="Koncz C."/>
            <person name="Szabados L."/>
        </authorList>
    </citation>
    <scope>FUNCTION</scope>
</reference>
<gene>
    <name evidence="6" type="primary">ZFP8</name>
    <name type="ordered locus">At2g41940</name>
    <name type="ORF">T6D20.16</name>
</gene>
<keyword id="KW-0938">Abscisic acid signaling pathway</keyword>
<keyword id="KW-0932">Cytokinin signaling pathway</keyword>
<keyword id="KW-0217">Developmental protein</keyword>
<keyword id="KW-0221">Differentiation</keyword>
<keyword id="KW-0939">Gibberellin signaling pathway</keyword>
<keyword id="KW-0479">Metal-binding</keyword>
<keyword id="KW-0539">Nucleus</keyword>
<keyword id="KW-1185">Reference proteome</keyword>
<keyword id="KW-0804">Transcription</keyword>
<keyword id="KW-0805">Transcription regulation</keyword>
<keyword id="KW-0862">Zinc</keyword>
<keyword id="KW-0863">Zinc-finger</keyword>
<accession>P93751</accession>
<accession>Q39267</accession>
<feature type="chain" id="PRO_0000425723" description="Zinc finger protein 8">
    <location>
        <begin position="1"/>
        <end position="257"/>
    </location>
</feature>
<feature type="zinc finger region" description="C2H2-type" evidence="2">
    <location>
        <begin position="95"/>
        <end position="117"/>
    </location>
</feature>
<feature type="region of interest" description="Disordered" evidence="3">
    <location>
        <begin position="48"/>
        <end position="92"/>
    </location>
</feature>
<feature type="region of interest" description="Disordered" evidence="3">
    <location>
        <begin position="108"/>
        <end position="128"/>
    </location>
</feature>
<feature type="region of interest" description="Disordered" evidence="3">
    <location>
        <begin position="214"/>
        <end position="238"/>
    </location>
</feature>
<feature type="compositionally biased region" description="Polar residues" evidence="3">
    <location>
        <begin position="50"/>
        <end position="65"/>
    </location>
</feature>
<feature type="compositionally biased region" description="Basic and acidic residues" evidence="3">
    <location>
        <begin position="66"/>
        <end position="92"/>
    </location>
</feature>
<feature type="compositionally biased region" description="Basic residues" evidence="3">
    <location>
        <begin position="115"/>
        <end position="126"/>
    </location>
</feature>